<dbReference type="EMBL" id="BX571965">
    <property type="protein sequence ID" value="CAH37217.1"/>
    <property type="molecule type" value="Genomic_DNA"/>
</dbReference>
<dbReference type="RefSeq" id="WP_004199857.1">
    <property type="nucleotide sequence ID" value="NZ_CP009538.1"/>
</dbReference>
<dbReference type="RefSeq" id="YP_109800.1">
    <property type="nucleotide sequence ID" value="NC_006350.1"/>
</dbReference>
<dbReference type="SMR" id="Q63Q18"/>
<dbReference type="STRING" id="272560.BPSL3206"/>
<dbReference type="GeneID" id="93061825"/>
<dbReference type="KEGG" id="bps:BPSL3206"/>
<dbReference type="PATRIC" id="fig|272560.51.peg.2032"/>
<dbReference type="eggNOG" id="COG0197">
    <property type="taxonomic scope" value="Bacteria"/>
</dbReference>
<dbReference type="Proteomes" id="UP000000605">
    <property type="component" value="Chromosome 1"/>
</dbReference>
<dbReference type="GO" id="GO:0022625">
    <property type="term" value="C:cytosolic large ribosomal subunit"/>
    <property type="evidence" value="ECO:0007669"/>
    <property type="project" value="TreeGrafter"/>
</dbReference>
<dbReference type="GO" id="GO:0019843">
    <property type="term" value="F:rRNA binding"/>
    <property type="evidence" value="ECO:0007669"/>
    <property type="project" value="UniProtKB-UniRule"/>
</dbReference>
<dbReference type="GO" id="GO:0003735">
    <property type="term" value="F:structural constituent of ribosome"/>
    <property type="evidence" value="ECO:0007669"/>
    <property type="project" value="InterPro"/>
</dbReference>
<dbReference type="GO" id="GO:0000049">
    <property type="term" value="F:tRNA binding"/>
    <property type="evidence" value="ECO:0007669"/>
    <property type="project" value="UniProtKB-KW"/>
</dbReference>
<dbReference type="GO" id="GO:0006412">
    <property type="term" value="P:translation"/>
    <property type="evidence" value="ECO:0007669"/>
    <property type="project" value="UniProtKB-UniRule"/>
</dbReference>
<dbReference type="CDD" id="cd01433">
    <property type="entry name" value="Ribosomal_L16_L10e"/>
    <property type="match status" value="1"/>
</dbReference>
<dbReference type="FunFam" id="3.90.1170.10:FF:000001">
    <property type="entry name" value="50S ribosomal protein L16"/>
    <property type="match status" value="1"/>
</dbReference>
<dbReference type="Gene3D" id="3.90.1170.10">
    <property type="entry name" value="Ribosomal protein L10e/L16"/>
    <property type="match status" value="1"/>
</dbReference>
<dbReference type="HAMAP" id="MF_01342">
    <property type="entry name" value="Ribosomal_uL16"/>
    <property type="match status" value="1"/>
</dbReference>
<dbReference type="InterPro" id="IPR047873">
    <property type="entry name" value="Ribosomal_uL16"/>
</dbReference>
<dbReference type="InterPro" id="IPR000114">
    <property type="entry name" value="Ribosomal_uL16_bact-type"/>
</dbReference>
<dbReference type="InterPro" id="IPR020798">
    <property type="entry name" value="Ribosomal_uL16_CS"/>
</dbReference>
<dbReference type="InterPro" id="IPR016180">
    <property type="entry name" value="Ribosomal_uL16_dom"/>
</dbReference>
<dbReference type="InterPro" id="IPR036920">
    <property type="entry name" value="Ribosomal_uL16_sf"/>
</dbReference>
<dbReference type="NCBIfam" id="TIGR01164">
    <property type="entry name" value="rplP_bact"/>
    <property type="match status" value="1"/>
</dbReference>
<dbReference type="PANTHER" id="PTHR12220">
    <property type="entry name" value="50S/60S RIBOSOMAL PROTEIN L16"/>
    <property type="match status" value="1"/>
</dbReference>
<dbReference type="PANTHER" id="PTHR12220:SF13">
    <property type="entry name" value="LARGE RIBOSOMAL SUBUNIT PROTEIN UL16M"/>
    <property type="match status" value="1"/>
</dbReference>
<dbReference type="Pfam" id="PF00252">
    <property type="entry name" value="Ribosomal_L16"/>
    <property type="match status" value="1"/>
</dbReference>
<dbReference type="PRINTS" id="PR00060">
    <property type="entry name" value="RIBOSOMALL16"/>
</dbReference>
<dbReference type="SUPFAM" id="SSF54686">
    <property type="entry name" value="Ribosomal protein L16p/L10e"/>
    <property type="match status" value="1"/>
</dbReference>
<dbReference type="PROSITE" id="PS00586">
    <property type="entry name" value="RIBOSOMAL_L16_1"/>
    <property type="match status" value="1"/>
</dbReference>
<evidence type="ECO:0000255" key="1">
    <source>
        <dbReference type="HAMAP-Rule" id="MF_01342"/>
    </source>
</evidence>
<evidence type="ECO:0000256" key="2">
    <source>
        <dbReference type="SAM" id="MobiDB-lite"/>
    </source>
</evidence>
<evidence type="ECO:0000305" key="3"/>
<protein>
    <recommendedName>
        <fullName evidence="1">Large ribosomal subunit protein uL16</fullName>
    </recommendedName>
    <alternativeName>
        <fullName evidence="3">50S ribosomal protein L16</fullName>
    </alternativeName>
</protein>
<accession>Q63Q18</accession>
<reference key="1">
    <citation type="journal article" date="2004" name="Proc. Natl. Acad. Sci. U.S.A.">
        <title>Genomic plasticity of the causative agent of melioidosis, Burkholderia pseudomallei.</title>
        <authorList>
            <person name="Holden M.T.G."/>
            <person name="Titball R.W."/>
            <person name="Peacock S.J."/>
            <person name="Cerdeno-Tarraga A.-M."/>
            <person name="Atkins T."/>
            <person name="Crossman L.C."/>
            <person name="Pitt T."/>
            <person name="Churcher C."/>
            <person name="Mungall K.L."/>
            <person name="Bentley S.D."/>
            <person name="Sebaihia M."/>
            <person name="Thomson N.R."/>
            <person name="Bason N."/>
            <person name="Beacham I.R."/>
            <person name="Brooks K."/>
            <person name="Brown K.A."/>
            <person name="Brown N.F."/>
            <person name="Challis G.L."/>
            <person name="Cherevach I."/>
            <person name="Chillingworth T."/>
            <person name="Cronin A."/>
            <person name="Crossett B."/>
            <person name="Davis P."/>
            <person name="DeShazer D."/>
            <person name="Feltwell T."/>
            <person name="Fraser A."/>
            <person name="Hance Z."/>
            <person name="Hauser H."/>
            <person name="Holroyd S."/>
            <person name="Jagels K."/>
            <person name="Keith K.E."/>
            <person name="Maddison M."/>
            <person name="Moule S."/>
            <person name="Price C."/>
            <person name="Quail M.A."/>
            <person name="Rabbinowitsch E."/>
            <person name="Rutherford K."/>
            <person name="Sanders M."/>
            <person name="Simmonds M."/>
            <person name="Songsivilai S."/>
            <person name="Stevens K."/>
            <person name="Tumapa S."/>
            <person name="Vesaratchavest M."/>
            <person name="Whitehead S."/>
            <person name="Yeats C."/>
            <person name="Barrell B.G."/>
            <person name="Oyston P.C.F."/>
            <person name="Parkhill J."/>
        </authorList>
    </citation>
    <scope>NUCLEOTIDE SEQUENCE [LARGE SCALE GENOMIC DNA]</scope>
    <source>
        <strain>K96243</strain>
    </source>
</reference>
<name>RL16_BURPS</name>
<feature type="chain" id="PRO_0000062069" description="Large ribosomal subunit protein uL16">
    <location>
        <begin position="1"/>
        <end position="138"/>
    </location>
</feature>
<feature type="region of interest" description="Disordered" evidence="2">
    <location>
        <begin position="1"/>
        <end position="20"/>
    </location>
</feature>
<feature type="compositionally biased region" description="Basic residues" evidence="2">
    <location>
        <begin position="1"/>
        <end position="13"/>
    </location>
</feature>
<keyword id="KW-1185">Reference proteome</keyword>
<keyword id="KW-0687">Ribonucleoprotein</keyword>
<keyword id="KW-0689">Ribosomal protein</keyword>
<keyword id="KW-0694">RNA-binding</keyword>
<keyword id="KW-0699">rRNA-binding</keyword>
<keyword id="KW-0820">tRNA-binding</keyword>
<comment type="function">
    <text evidence="1">Binds 23S rRNA and is also seen to make contacts with the A and possibly P site tRNAs.</text>
</comment>
<comment type="subunit">
    <text evidence="1">Part of the 50S ribosomal subunit.</text>
</comment>
<comment type="similarity">
    <text evidence="1">Belongs to the universal ribosomal protein uL16 family.</text>
</comment>
<proteinExistence type="inferred from homology"/>
<sequence>MLQPKRRKYRKEQKGRNTGIATRGNAVSFGEFGLKAVGRGRLTARQIEAARRAMTRHIKRGGRIWIRIFPDKPISQKPAEVRMGNGKGNPEYYVAEIQPGKMLYEMDGVSEELAREAFRLAAAKLPLKTTFIVRQLGA</sequence>
<organism>
    <name type="scientific">Burkholderia pseudomallei (strain K96243)</name>
    <dbReference type="NCBI Taxonomy" id="272560"/>
    <lineage>
        <taxon>Bacteria</taxon>
        <taxon>Pseudomonadati</taxon>
        <taxon>Pseudomonadota</taxon>
        <taxon>Betaproteobacteria</taxon>
        <taxon>Burkholderiales</taxon>
        <taxon>Burkholderiaceae</taxon>
        <taxon>Burkholderia</taxon>
        <taxon>pseudomallei group</taxon>
    </lineage>
</organism>
<gene>
    <name evidence="1" type="primary">rplP</name>
    <name type="ordered locus">BPSL3206</name>
</gene>